<organism>
    <name type="scientific">Oryza sativa subsp. japonica</name>
    <name type="common">Rice</name>
    <dbReference type="NCBI Taxonomy" id="39947"/>
    <lineage>
        <taxon>Eukaryota</taxon>
        <taxon>Viridiplantae</taxon>
        <taxon>Streptophyta</taxon>
        <taxon>Embryophyta</taxon>
        <taxon>Tracheophyta</taxon>
        <taxon>Spermatophyta</taxon>
        <taxon>Magnoliopsida</taxon>
        <taxon>Liliopsida</taxon>
        <taxon>Poales</taxon>
        <taxon>Poaceae</taxon>
        <taxon>BOP clade</taxon>
        <taxon>Oryzoideae</taxon>
        <taxon>Oryzeae</taxon>
        <taxon>Oryzinae</taxon>
        <taxon>Oryza</taxon>
        <taxon>Oryza sativa</taxon>
    </lineage>
</organism>
<name>RH35A_ORYSJ</name>
<sequence length="627" mass="69242">MAAATASSPATAAAANSDDEDNYEEYIPVAKRRAMEADRLRRLRLSKPAPPSSSAAEAASDLPPPPPPPPNQPSAGGGGGGLEASAKPSLLVKATQLKRAAPEVTHTEQLIMQEKEMIEHLSDRKTLMSVRELAKGITYSDPLKTGWKPPLRLRRMPRAKADELRRKWHILVDGDDVPPPARDFRDLRLPEPMLRKLREKGIVQPTPIQVQGLPVVLSGRDMIGIAFTGSGKTLVFVLPLIMVALQEEMMMPIVPGEGPFGMIICPSRELAKQTYDVIEQFLVPLKEAGYPEIRPLLCIGGVDMRAQLDVVKKGVHIVVATPGRLKDLLAKKKMNLDNCRYLTLDEADRLVDLGFEDDIREVFDHFKAQRQTLLFSATMPKKIQNFAKSALVKPVIVNVGRAGAANLDVIQEVEYVKEDARIIYLLECLQKTPPPVLVFCENKADVDYIHEYLLLKGVEAVAIHGGKDQEERENAIEFFKNGKKDVLVATDVASKGLDFPDIQHVINYDMPAEIENYVHRIGRTGRCGKTGIATTFINKNQTETTLLDLKHLLKEAKQRIPPVLAELNDPLEDEETMAKESGVKGCAYCGGLGHRVTDCPKLEHQKSMAIAGSRRDYYGGGGYRGEI</sequence>
<gene>
    <name type="ordered locus">Os02g0150100</name>
    <name type="ordered locus">LOC_Os02g05660</name>
    <name type="ORF">OSJNBa0050G13.7</name>
</gene>
<evidence type="ECO:0000255" key="1">
    <source>
        <dbReference type="PROSITE-ProRule" id="PRU00047"/>
    </source>
</evidence>
<evidence type="ECO:0000255" key="2">
    <source>
        <dbReference type="PROSITE-ProRule" id="PRU00541"/>
    </source>
</evidence>
<evidence type="ECO:0000255" key="3">
    <source>
        <dbReference type="PROSITE-ProRule" id="PRU00542"/>
    </source>
</evidence>
<evidence type="ECO:0000256" key="4">
    <source>
        <dbReference type="SAM" id="MobiDB-lite"/>
    </source>
</evidence>
<evidence type="ECO:0000305" key="5"/>
<keyword id="KW-0067">ATP-binding</keyword>
<keyword id="KW-0347">Helicase</keyword>
<keyword id="KW-0378">Hydrolase</keyword>
<keyword id="KW-0479">Metal-binding</keyword>
<keyword id="KW-0547">Nucleotide-binding</keyword>
<keyword id="KW-1185">Reference proteome</keyword>
<keyword id="KW-0694">RNA-binding</keyword>
<keyword id="KW-0862">Zinc</keyword>
<keyword id="KW-0863">Zinc-finger</keyword>
<accession>Q0E3X4</accession>
<accession>Q67UX4</accession>
<dbReference type="EC" id="3.6.4.13"/>
<dbReference type="EMBL" id="AP005412">
    <property type="protein sequence ID" value="BAD38045.1"/>
    <property type="molecule type" value="Genomic_DNA"/>
</dbReference>
<dbReference type="EMBL" id="AP008208">
    <property type="protein sequence ID" value="BAF07814.1"/>
    <property type="status" value="ALT_INIT"/>
    <property type="molecule type" value="Genomic_DNA"/>
</dbReference>
<dbReference type="EMBL" id="AP014958">
    <property type="status" value="NOT_ANNOTATED_CDS"/>
    <property type="molecule type" value="Genomic_DNA"/>
</dbReference>
<dbReference type="EMBL" id="AK060595">
    <property type="status" value="NOT_ANNOTATED_CDS"/>
    <property type="molecule type" value="mRNA"/>
</dbReference>
<dbReference type="RefSeq" id="XP_015626564.1">
    <property type="nucleotide sequence ID" value="XM_015771078.1"/>
</dbReference>
<dbReference type="SMR" id="Q0E3X4"/>
<dbReference type="FunCoup" id="Q0E3X4">
    <property type="interactions" value="2748"/>
</dbReference>
<dbReference type="STRING" id="39947.Q0E3X4"/>
<dbReference type="PaxDb" id="39947-Q0E3X4"/>
<dbReference type="KEGG" id="dosa:Os02g0150100"/>
<dbReference type="eggNOG" id="KOG0341">
    <property type="taxonomic scope" value="Eukaryota"/>
</dbReference>
<dbReference type="HOGENOM" id="CLU_003041_16_5_1"/>
<dbReference type="InParanoid" id="Q0E3X4"/>
<dbReference type="OrthoDB" id="196131at2759"/>
<dbReference type="Proteomes" id="UP000000763">
    <property type="component" value="Chromosome 2"/>
</dbReference>
<dbReference type="Proteomes" id="UP000059680">
    <property type="component" value="Chromosome 2"/>
</dbReference>
<dbReference type="GO" id="GO:0005681">
    <property type="term" value="C:spliceosomal complex"/>
    <property type="evidence" value="ECO:0000318"/>
    <property type="project" value="GO_Central"/>
</dbReference>
<dbReference type="GO" id="GO:0005524">
    <property type="term" value="F:ATP binding"/>
    <property type="evidence" value="ECO:0007669"/>
    <property type="project" value="UniProtKB-KW"/>
</dbReference>
<dbReference type="GO" id="GO:0016887">
    <property type="term" value="F:ATP hydrolysis activity"/>
    <property type="evidence" value="ECO:0007669"/>
    <property type="project" value="RHEA"/>
</dbReference>
<dbReference type="GO" id="GO:0003729">
    <property type="term" value="F:mRNA binding"/>
    <property type="evidence" value="ECO:0000318"/>
    <property type="project" value="GO_Central"/>
</dbReference>
<dbReference type="GO" id="GO:0003724">
    <property type="term" value="F:RNA helicase activity"/>
    <property type="evidence" value="ECO:0000318"/>
    <property type="project" value="GO_Central"/>
</dbReference>
<dbReference type="GO" id="GO:0008270">
    <property type="term" value="F:zinc ion binding"/>
    <property type="evidence" value="ECO:0007669"/>
    <property type="project" value="UniProtKB-KW"/>
</dbReference>
<dbReference type="GO" id="GO:0000398">
    <property type="term" value="P:mRNA splicing, via spliceosome"/>
    <property type="evidence" value="ECO:0000318"/>
    <property type="project" value="GO_Central"/>
</dbReference>
<dbReference type="CDD" id="cd17951">
    <property type="entry name" value="DEADc_DDX41"/>
    <property type="match status" value="1"/>
</dbReference>
<dbReference type="CDD" id="cd18787">
    <property type="entry name" value="SF2_C_DEAD"/>
    <property type="match status" value="1"/>
</dbReference>
<dbReference type="FunFam" id="3.40.50.300:FF:000449">
    <property type="entry name" value="Probable ATP-dependent RNA helicase DDX41"/>
    <property type="match status" value="1"/>
</dbReference>
<dbReference type="FunFam" id="3.40.50.300:FF:000657">
    <property type="entry name" value="Probable ATP-dependent RNA helicase DDX41"/>
    <property type="match status" value="1"/>
</dbReference>
<dbReference type="Gene3D" id="3.40.50.300">
    <property type="entry name" value="P-loop containing nucleotide triphosphate hydrolases"/>
    <property type="match status" value="2"/>
</dbReference>
<dbReference type="InterPro" id="IPR011545">
    <property type="entry name" value="DEAD/DEAH_box_helicase_dom"/>
</dbReference>
<dbReference type="InterPro" id="IPR044113">
    <property type="entry name" value="DEADc_DDX41"/>
</dbReference>
<dbReference type="InterPro" id="IPR014001">
    <property type="entry name" value="Helicase_ATP-bd"/>
</dbReference>
<dbReference type="InterPro" id="IPR001650">
    <property type="entry name" value="Helicase_C-like"/>
</dbReference>
<dbReference type="InterPro" id="IPR027417">
    <property type="entry name" value="P-loop_NTPase"/>
</dbReference>
<dbReference type="InterPro" id="IPR014014">
    <property type="entry name" value="RNA_helicase_DEAD_Q_motif"/>
</dbReference>
<dbReference type="InterPro" id="IPR001878">
    <property type="entry name" value="Znf_CCHC"/>
</dbReference>
<dbReference type="InterPro" id="IPR036875">
    <property type="entry name" value="Znf_CCHC_sf"/>
</dbReference>
<dbReference type="PANTHER" id="PTHR47958">
    <property type="entry name" value="ATP-DEPENDENT RNA HELICASE DBP3"/>
    <property type="match status" value="1"/>
</dbReference>
<dbReference type="Pfam" id="PF00270">
    <property type="entry name" value="DEAD"/>
    <property type="match status" value="1"/>
</dbReference>
<dbReference type="Pfam" id="PF00271">
    <property type="entry name" value="Helicase_C"/>
    <property type="match status" value="1"/>
</dbReference>
<dbReference type="SMART" id="SM00487">
    <property type="entry name" value="DEXDc"/>
    <property type="match status" value="1"/>
</dbReference>
<dbReference type="SMART" id="SM00490">
    <property type="entry name" value="HELICc"/>
    <property type="match status" value="1"/>
</dbReference>
<dbReference type="SMART" id="SM00343">
    <property type="entry name" value="ZnF_C2HC"/>
    <property type="match status" value="1"/>
</dbReference>
<dbReference type="SUPFAM" id="SSF52540">
    <property type="entry name" value="P-loop containing nucleoside triphosphate hydrolases"/>
    <property type="match status" value="1"/>
</dbReference>
<dbReference type="SUPFAM" id="SSF57756">
    <property type="entry name" value="Retrovirus zinc finger-like domains"/>
    <property type="match status" value="1"/>
</dbReference>
<dbReference type="PROSITE" id="PS51192">
    <property type="entry name" value="HELICASE_ATP_BIND_1"/>
    <property type="match status" value="1"/>
</dbReference>
<dbReference type="PROSITE" id="PS51194">
    <property type="entry name" value="HELICASE_CTER"/>
    <property type="match status" value="1"/>
</dbReference>
<dbReference type="PROSITE" id="PS51195">
    <property type="entry name" value="Q_MOTIF"/>
    <property type="match status" value="1"/>
</dbReference>
<dbReference type="PROSITE" id="PS50158">
    <property type="entry name" value="ZF_CCHC"/>
    <property type="match status" value="1"/>
</dbReference>
<reference key="1">
    <citation type="journal article" date="2005" name="Nature">
        <title>The map-based sequence of the rice genome.</title>
        <authorList>
            <consortium name="International rice genome sequencing project (IRGSP)"/>
        </authorList>
    </citation>
    <scope>NUCLEOTIDE SEQUENCE [LARGE SCALE GENOMIC DNA]</scope>
    <source>
        <strain>cv. Nipponbare</strain>
    </source>
</reference>
<reference key="2">
    <citation type="journal article" date="2008" name="Nucleic Acids Res.">
        <title>The rice annotation project database (RAP-DB): 2008 update.</title>
        <authorList>
            <consortium name="The rice annotation project (RAP)"/>
        </authorList>
    </citation>
    <scope>GENOME REANNOTATION</scope>
    <source>
        <strain>cv. Nipponbare</strain>
    </source>
</reference>
<reference key="3">
    <citation type="journal article" date="2013" name="Rice">
        <title>Improvement of the Oryza sativa Nipponbare reference genome using next generation sequence and optical map data.</title>
        <authorList>
            <person name="Kawahara Y."/>
            <person name="de la Bastide M."/>
            <person name="Hamilton J.P."/>
            <person name="Kanamori H."/>
            <person name="McCombie W.R."/>
            <person name="Ouyang S."/>
            <person name="Schwartz D.C."/>
            <person name="Tanaka T."/>
            <person name="Wu J."/>
            <person name="Zhou S."/>
            <person name="Childs K.L."/>
            <person name="Davidson R.M."/>
            <person name="Lin H."/>
            <person name="Quesada-Ocampo L."/>
            <person name="Vaillancourt B."/>
            <person name="Sakai H."/>
            <person name="Lee S.S."/>
            <person name="Kim J."/>
            <person name="Numa H."/>
            <person name="Itoh T."/>
            <person name="Buell C.R."/>
            <person name="Matsumoto T."/>
        </authorList>
    </citation>
    <scope>GENOME REANNOTATION</scope>
    <source>
        <strain>cv. Nipponbare</strain>
    </source>
</reference>
<reference key="4">
    <citation type="journal article" date="2003" name="Science">
        <title>Collection, mapping, and annotation of over 28,000 cDNA clones from japonica rice.</title>
        <authorList>
            <consortium name="The rice full-length cDNA consortium"/>
        </authorList>
    </citation>
    <scope>NUCLEOTIDE SEQUENCE [LARGE SCALE MRNA] OF 168-627</scope>
    <source>
        <strain>cv. Nipponbare</strain>
    </source>
</reference>
<feature type="chain" id="PRO_0000282498" description="DEAD-box ATP-dependent RNA helicase 35A">
    <location>
        <begin position="1"/>
        <end position="627"/>
    </location>
</feature>
<feature type="domain" description="Helicase ATP-binding" evidence="2">
    <location>
        <begin position="213"/>
        <end position="397"/>
    </location>
</feature>
<feature type="domain" description="Helicase C-terminal" evidence="3">
    <location>
        <begin position="408"/>
        <end position="568"/>
    </location>
</feature>
<feature type="zinc finger region" description="CCHC-type" evidence="1">
    <location>
        <begin position="584"/>
        <end position="601"/>
    </location>
</feature>
<feature type="region of interest" description="Disordered" evidence="4">
    <location>
        <begin position="1"/>
        <end position="23"/>
    </location>
</feature>
<feature type="region of interest" description="Disordered" evidence="4">
    <location>
        <begin position="40"/>
        <end position="85"/>
    </location>
</feature>
<feature type="short sequence motif" description="Q motif">
    <location>
        <begin position="182"/>
        <end position="210"/>
    </location>
</feature>
<feature type="short sequence motif" description="DEAD box">
    <location>
        <begin position="345"/>
        <end position="348"/>
    </location>
</feature>
<feature type="compositionally biased region" description="Low complexity" evidence="4">
    <location>
        <begin position="1"/>
        <end position="15"/>
    </location>
</feature>
<feature type="compositionally biased region" description="Low complexity" evidence="4">
    <location>
        <begin position="52"/>
        <end position="61"/>
    </location>
</feature>
<feature type="compositionally biased region" description="Pro residues" evidence="4">
    <location>
        <begin position="62"/>
        <end position="72"/>
    </location>
</feature>
<feature type="binding site" evidence="2">
    <location>
        <begin position="226"/>
        <end position="233"/>
    </location>
    <ligand>
        <name>ATP</name>
        <dbReference type="ChEBI" id="CHEBI:30616"/>
    </ligand>
</feature>
<proteinExistence type="evidence at transcript level"/>
<comment type="catalytic activity">
    <reaction>
        <text>ATP + H2O = ADP + phosphate + H(+)</text>
        <dbReference type="Rhea" id="RHEA:13065"/>
        <dbReference type="ChEBI" id="CHEBI:15377"/>
        <dbReference type="ChEBI" id="CHEBI:15378"/>
        <dbReference type="ChEBI" id="CHEBI:30616"/>
        <dbReference type="ChEBI" id="CHEBI:43474"/>
        <dbReference type="ChEBI" id="CHEBI:456216"/>
        <dbReference type="EC" id="3.6.4.13"/>
    </reaction>
</comment>
<comment type="domain">
    <text>The Q motif is unique to and characteristic of the DEAD box family of RNA helicases and controls ATP binding and hydrolysis.</text>
</comment>
<comment type="similarity">
    <text evidence="5">Belongs to the DEAD box helicase family. DDX41 subfamily.</text>
</comment>
<comment type="sequence caution" evidence="5">
    <conflict type="erroneous initiation">
        <sequence resource="EMBL-CDS" id="BAF07814"/>
    </conflict>
</comment>
<protein>
    <recommendedName>
        <fullName>DEAD-box ATP-dependent RNA helicase 35A</fullName>
        <ecNumber>3.6.4.13</ecNumber>
    </recommendedName>
</protein>